<gene>
    <name evidence="1" type="primary">gcvT</name>
    <name type="ordered locus">Cpar_0418</name>
</gene>
<name>GCST_CHLP8</name>
<feature type="chain" id="PRO_1000114087" description="Aminomethyltransferase">
    <location>
        <begin position="1"/>
        <end position="365"/>
    </location>
</feature>
<comment type="function">
    <text evidence="1">The glycine cleavage system catalyzes the degradation of glycine.</text>
</comment>
<comment type="catalytic activity">
    <reaction evidence="1">
        <text>N(6)-[(R)-S(8)-aminomethyldihydrolipoyl]-L-lysyl-[protein] + (6S)-5,6,7,8-tetrahydrofolate = N(6)-[(R)-dihydrolipoyl]-L-lysyl-[protein] + (6R)-5,10-methylene-5,6,7,8-tetrahydrofolate + NH4(+)</text>
        <dbReference type="Rhea" id="RHEA:16945"/>
        <dbReference type="Rhea" id="RHEA-COMP:10475"/>
        <dbReference type="Rhea" id="RHEA-COMP:10492"/>
        <dbReference type="ChEBI" id="CHEBI:15636"/>
        <dbReference type="ChEBI" id="CHEBI:28938"/>
        <dbReference type="ChEBI" id="CHEBI:57453"/>
        <dbReference type="ChEBI" id="CHEBI:83100"/>
        <dbReference type="ChEBI" id="CHEBI:83143"/>
        <dbReference type="EC" id="2.1.2.10"/>
    </reaction>
</comment>
<comment type="subunit">
    <text evidence="1">The glycine cleavage system is composed of four proteins: P, T, L and H.</text>
</comment>
<comment type="similarity">
    <text evidence="1">Belongs to the GcvT family.</text>
</comment>
<accession>B3QLF1</accession>
<organism>
    <name type="scientific">Chlorobaculum parvum (strain DSM 263 / NCIMB 8327)</name>
    <name type="common">Chlorobium vibrioforme subsp. thiosulfatophilum</name>
    <dbReference type="NCBI Taxonomy" id="517417"/>
    <lineage>
        <taxon>Bacteria</taxon>
        <taxon>Pseudomonadati</taxon>
        <taxon>Chlorobiota</taxon>
        <taxon>Chlorobiia</taxon>
        <taxon>Chlorobiales</taxon>
        <taxon>Chlorobiaceae</taxon>
        <taxon>Chlorobaculum</taxon>
    </lineage>
</organism>
<sequence>MKKTALSAWHEGAGAKMIDFGGFLMPVQYSGIIAEHKAVREAAGLFDVSHMGNFYVRGERALEFLQYVTTNDLGKIVDGQAQYTLMLYPDGGIVDDLIIYRVSADTFFLIVNASNCEKDFAWLSDHVGGFEGVTLENRTSELSLIALQGPKAFEVLGRVFPEAGLDKLASFHFATVPFGGAEAMVARTGYTGEAGVEICLPNEEAEALWTALMAAGKNDGIQPIGLGARDTLRLEMGYSLYGHEIDQTVNPLEARLKWVVKMDKPNFIGKQACQQVELDPRKSVVGFSLDGRAIPRQHFKVYNSDKQEIGEVCSGTVSPTLQEPIGTASLLRDYAKTGTPIFVEIRGTFQPGTVRRLPFVHADRP</sequence>
<dbReference type="EC" id="2.1.2.10" evidence="1"/>
<dbReference type="EMBL" id="CP001099">
    <property type="protein sequence ID" value="ACF10841.1"/>
    <property type="molecule type" value="Genomic_DNA"/>
</dbReference>
<dbReference type="RefSeq" id="WP_012501674.1">
    <property type="nucleotide sequence ID" value="NC_011027.1"/>
</dbReference>
<dbReference type="SMR" id="B3QLF1"/>
<dbReference type="STRING" id="517417.Cpar_0418"/>
<dbReference type="KEGG" id="cpc:Cpar_0418"/>
<dbReference type="eggNOG" id="COG0404">
    <property type="taxonomic scope" value="Bacteria"/>
</dbReference>
<dbReference type="HOGENOM" id="CLU_007884_10_2_10"/>
<dbReference type="OrthoDB" id="9774591at2"/>
<dbReference type="Proteomes" id="UP000008811">
    <property type="component" value="Chromosome"/>
</dbReference>
<dbReference type="GO" id="GO:0005829">
    <property type="term" value="C:cytosol"/>
    <property type="evidence" value="ECO:0007669"/>
    <property type="project" value="TreeGrafter"/>
</dbReference>
<dbReference type="GO" id="GO:0005960">
    <property type="term" value="C:glycine cleavage complex"/>
    <property type="evidence" value="ECO:0007669"/>
    <property type="project" value="InterPro"/>
</dbReference>
<dbReference type="GO" id="GO:0004047">
    <property type="term" value="F:aminomethyltransferase activity"/>
    <property type="evidence" value="ECO:0007669"/>
    <property type="project" value="UniProtKB-UniRule"/>
</dbReference>
<dbReference type="GO" id="GO:0008483">
    <property type="term" value="F:transaminase activity"/>
    <property type="evidence" value="ECO:0007669"/>
    <property type="project" value="UniProtKB-KW"/>
</dbReference>
<dbReference type="GO" id="GO:0019464">
    <property type="term" value="P:glycine decarboxylation via glycine cleavage system"/>
    <property type="evidence" value="ECO:0007669"/>
    <property type="project" value="UniProtKB-UniRule"/>
</dbReference>
<dbReference type="FunFam" id="3.30.70.1400:FF:000001">
    <property type="entry name" value="Aminomethyltransferase"/>
    <property type="match status" value="1"/>
</dbReference>
<dbReference type="Gene3D" id="2.40.30.110">
    <property type="entry name" value="Aminomethyltransferase beta-barrel domains"/>
    <property type="match status" value="1"/>
</dbReference>
<dbReference type="Gene3D" id="3.30.70.1400">
    <property type="entry name" value="Aminomethyltransferase beta-barrel domains"/>
    <property type="match status" value="1"/>
</dbReference>
<dbReference type="Gene3D" id="4.10.1250.10">
    <property type="entry name" value="Aminomethyltransferase fragment"/>
    <property type="match status" value="1"/>
</dbReference>
<dbReference type="Gene3D" id="3.30.1360.120">
    <property type="entry name" value="Probable tRNA modification gtpase trme, domain 1"/>
    <property type="match status" value="1"/>
</dbReference>
<dbReference type="HAMAP" id="MF_00259">
    <property type="entry name" value="GcvT"/>
    <property type="match status" value="1"/>
</dbReference>
<dbReference type="InterPro" id="IPR006223">
    <property type="entry name" value="GCS_T"/>
</dbReference>
<dbReference type="InterPro" id="IPR022903">
    <property type="entry name" value="GCS_T_bac"/>
</dbReference>
<dbReference type="InterPro" id="IPR013977">
    <property type="entry name" value="GCST_C"/>
</dbReference>
<dbReference type="InterPro" id="IPR006222">
    <property type="entry name" value="GCV_T_N"/>
</dbReference>
<dbReference type="InterPro" id="IPR028896">
    <property type="entry name" value="GcvT/YgfZ/DmdA"/>
</dbReference>
<dbReference type="InterPro" id="IPR029043">
    <property type="entry name" value="GcvT/YgfZ_C"/>
</dbReference>
<dbReference type="InterPro" id="IPR027266">
    <property type="entry name" value="TrmE/GcvT_dom1"/>
</dbReference>
<dbReference type="NCBIfam" id="TIGR00528">
    <property type="entry name" value="gcvT"/>
    <property type="match status" value="1"/>
</dbReference>
<dbReference type="NCBIfam" id="NF001567">
    <property type="entry name" value="PRK00389.1"/>
    <property type="match status" value="1"/>
</dbReference>
<dbReference type="PANTHER" id="PTHR43757">
    <property type="entry name" value="AMINOMETHYLTRANSFERASE"/>
    <property type="match status" value="1"/>
</dbReference>
<dbReference type="PANTHER" id="PTHR43757:SF2">
    <property type="entry name" value="AMINOMETHYLTRANSFERASE, MITOCHONDRIAL"/>
    <property type="match status" value="1"/>
</dbReference>
<dbReference type="Pfam" id="PF01571">
    <property type="entry name" value="GCV_T"/>
    <property type="match status" value="1"/>
</dbReference>
<dbReference type="Pfam" id="PF08669">
    <property type="entry name" value="GCV_T_C"/>
    <property type="match status" value="1"/>
</dbReference>
<dbReference type="PIRSF" id="PIRSF006487">
    <property type="entry name" value="GcvT"/>
    <property type="match status" value="1"/>
</dbReference>
<dbReference type="SUPFAM" id="SSF101790">
    <property type="entry name" value="Aminomethyltransferase beta-barrel domain"/>
    <property type="match status" value="1"/>
</dbReference>
<dbReference type="SUPFAM" id="SSF103025">
    <property type="entry name" value="Folate-binding domain"/>
    <property type="match status" value="1"/>
</dbReference>
<proteinExistence type="inferred from homology"/>
<evidence type="ECO:0000255" key="1">
    <source>
        <dbReference type="HAMAP-Rule" id="MF_00259"/>
    </source>
</evidence>
<reference key="1">
    <citation type="submission" date="2008-06" db="EMBL/GenBank/DDBJ databases">
        <title>Complete sequence of Chlorobaculum parvum NCIB 8327.</title>
        <authorList>
            <consortium name="US DOE Joint Genome Institute"/>
            <person name="Lucas S."/>
            <person name="Copeland A."/>
            <person name="Lapidus A."/>
            <person name="Glavina del Rio T."/>
            <person name="Dalin E."/>
            <person name="Tice H."/>
            <person name="Bruce D."/>
            <person name="Goodwin L."/>
            <person name="Pitluck S."/>
            <person name="Schmutz J."/>
            <person name="Larimer F."/>
            <person name="Land M."/>
            <person name="Hauser L."/>
            <person name="Kyrpides N."/>
            <person name="Mikhailova N."/>
            <person name="Zhao F."/>
            <person name="Li T."/>
            <person name="Liu Z."/>
            <person name="Overmann J."/>
            <person name="Bryant D.A."/>
            <person name="Richardson P."/>
        </authorList>
    </citation>
    <scope>NUCLEOTIDE SEQUENCE [LARGE SCALE GENOMIC DNA]</scope>
    <source>
        <strain>DSM 263 / NCIMB 8327</strain>
    </source>
</reference>
<keyword id="KW-0032">Aminotransferase</keyword>
<keyword id="KW-0808">Transferase</keyword>
<protein>
    <recommendedName>
        <fullName evidence="1">Aminomethyltransferase</fullName>
        <ecNumber evidence="1">2.1.2.10</ecNumber>
    </recommendedName>
    <alternativeName>
        <fullName evidence="1">Glycine cleavage system T protein</fullName>
    </alternativeName>
</protein>